<name>RL5_MYCA1</name>
<reference key="1">
    <citation type="submission" date="2006-10" db="EMBL/GenBank/DDBJ databases">
        <authorList>
            <person name="Fleischmann R.D."/>
            <person name="Dodson R.J."/>
            <person name="Haft D.H."/>
            <person name="Merkel J.S."/>
            <person name="Nelson W.C."/>
            <person name="Fraser C.M."/>
        </authorList>
    </citation>
    <scope>NUCLEOTIDE SEQUENCE [LARGE SCALE GENOMIC DNA]</scope>
    <source>
        <strain>104</strain>
    </source>
</reference>
<accession>A0QL00</accession>
<feature type="chain" id="PRO_1000052775" description="Large ribosomal subunit protein uL5">
    <location>
        <begin position="1"/>
        <end position="187"/>
    </location>
</feature>
<protein>
    <recommendedName>
        <fullName evidence="1">Large ribosomal subunit protein uL5</fullName>
    </recommendedName>
    <alternativeName>
        <fullName evidence="2">50S ribosomal protein L5</fullName>
    </alternativeName>
</protein>
<comment type="function">
    <text evidence="1">This is one of the proteins that bind and probably mediate the attachment of the 5S RNA into the large ribosomal subunit, where it forms part of the central protuberance. In the 70S ribosome it contacts protein S13 of the 30S subunit (bridge B1b), connecting the 2 subunits; this bridge is implicated in subunit movement. Contacts the P site tRNA; the 5S rRNA and some of its associated proteins might help stabilize positioning of ribosome-bound tRNAs.</text>
</comment>
<comment type="subunit">
    <text evidence="1">Part of the 50S ribosomal subunit; part of the 5S rRNA/L5/L18/L25 subcomplex. Contacts the 5S rRNA and the P site tRNA. Forms a bridge to the 30S subunit in the 70S ribosome.</text>
</comment>
<comment type="similarity">
    <text evidence="1">Belongs to the universal ribosomal protein uL5 family.</text>
</comment>
<gene>
    <name evidence="1" type="primary">rplE</name>
    <name type="ordered locus">MAV_4453</name>
</gene>
<proteinExistence type="inferred from homology"/>
<dbReference type="EMBL" id="CP000479">
    <property type="protein sequence ID" value="ABK66332.1"/>
    <property type="molecule type" value="Genomic_DNA"/>
</dbReference>
<dbReference type="RefSeq" id="WP_003873500.1">
    <property type="nucleotide sequence ID" value="NC_008595.1"/>
</dbReference>
<dbReference type="SMR" id="A0QL00"/>
<dbReference type="GeneID" id="75271967"/>
<dbReference type="KEGG" id="mav:MAV_4453"/>
<dbReference type="HOGENOM" id="CLU_061015_2_1_11"/>
<dbReference type="Proteomes" id="UP000001574">
    <property type="component" value="Chromosome"/>
</dbReference>
<dbReference type="GO" id="GO:1990904">
    <property type="term" value="C:ribonucleoprotein complex"/>
    <property type="evidence" value="ECO:0007669"/>
    <property type="project" value="UniProtKB-KW"/>
</dbReference>
<dbReference type="GO" id="GO:0005840">
    <property type="term" value="C:ribosome"/>
    <property type="evidence" value="ECO:0007669"/>
    <property type="project" value="UniProtKB-KW"/>
</dbReference>
<dbReference type="GO" id="GO:0019843">
    <property type="term" value="F:rRNA binding"/>
    <property type="evidence" value="ECO:0007669"/>
    <property type="project" value="UniProtKB-UniRule"/>
</dbReference>
<dbReference type="GO" id="GO:0003735">
    <property type="term" value="F:structural constituent of ribosome"/>
    <property type="evidence" value="ECO:0007669"/>
    <property type="project" value="InterPro"/>
</dbReference>
<dbReference type="GO" id="GO:0000049">
    <property type="term" value="F:tRNA binding"/>
    <property type="evidence" value="ECO:0007669"/>
    <property type="project" value="UniProtKB-UniRule"/>
</dbReference>
<dbReference type="GO" id="GO:0006412">
    <property type="term" value="P:translation"/>
    <property type="evidence" value="ECO:0007669"/>
    <property type="project" value="UniProtKB-UniRule"/>
</dbReference>
<dbReference type="FunFam" id="3.30.1440.10:FF:000001">
    <property type="entry name" value="50S ribosomal protein L5"/>
    <property type="match status" value="1"/>
</dbReference>
<dbReference type="Gene3D" id="3.30.1440.10">
    <property type="match status" value="1"/>
</dbReference>
<dbReference type="HAMAP" id="MF_01333_B">
    <property type="entry name" value="Ribosomal_uL5_B"/>
    <property type="match status" value="1"/>
</dbReference>
<dbReference type="InterPro" id="IPR002132">
    <property type="entry name" value="Ribosomal_uL5"/>
</dbReference>
<dbReference type="InterPro" id="IPR020930">
    <property type="entry name" value="Ribosomal_uL5_bac-type"/>
</dbReference>
<dbReference type="InterPro" id="IPR031309">
    <property type="entry name" value="Ribosomal_uL5_C"/>
</dbReference>
<dbReference type="InterPro" id="IPR022803">
    <property type="entry name" value="Ribosomal_uL5_dom_sf"/>
</dbReference>
<dbReference type="InterPro" id="IPR031310">
    <property type="entry name" value="Ribosomal_uL5_N"/>
</dbReference>
<dbReference type="NCBIfam" id="NF000585">
    <property type="entry name" value="PRK00010.1"/>
    <property type="match status" value="1"/>
</dbReference>
<dbReference type="PANTHER" id="PTHR11994">
    <property type="entry name" value="60S RIBOSOMAL PROTEIN L11-RELATED"/>
    <property type="match status" value="1"/>
</dbReference>
<dbReference type="Pfam" id="PF00281">
    <property type="entry name" value="Ribosomal_L5"/>
    <property type="match status" value="1"/>
</dbReference>
<dbReference type="Pfam" id="PF00673">
    <property type="entry name" value="Ribosomal_L5_C"/>
    <property type="match status" value="1"/>
</dbReference>
<dbReference type="PIRSF" id="PIRSF002161">
    <property type="entry name" value="Ribosomal_L5"/>
    <property type="match status" value="1"/>
</dbReference>
<dbReference type="SUPFAM" id="SSF55282">
    <property type="entry name" value="RL5-like"/>
    <property type="match status" value="1"/>
</dbReference>
<organism>
    <name type="scientific">Mycobacterium avium (strain 104)</name>
    <dbReference type="NCBI Taxonomy" id="243243"/>
    <lineage>
        <taxon>Bacteria</taxon>
        <taxon>Bacillati</taxon>
        <taxon>Actinomycetota</taxon>
        <taxon>Actinomycetes</taxon>
        <taxon>Mycobacteriales</taxon>
        <taxon>Mycobacteriaceae</taxon>
        <taxon>Mycobacterium</taxon>
        <taxon>Mycobacterium avium complex (MAC)</taxon>
    </lineage>
</organism>
<evidence type="ECO:0000255" key="1">
    <source>
        <dbReference type="HAMAP-Rule" id="MF_01333"/>
    </source>
</evidence>
<evidence type="ECO:0000305" key="2"/>
<keyword id="KW-0687">Ribonucleoprotein</keyword>
<keyword id="KW-0689">Ribosomal protein</keyword>
<keyword id="KW-0694">RNA-binding</keyword>
<keyword id="KW-0699">rRNA-binding</keyword>
<keyword id="KW-0820">tRNA-binding</keyword>
<sequence>MTTTEKVQPRLKERYRNEIRDSLQQQFGYANVMQIPTVTKVVVNMGIGEAARDAKLINGAVNDLALITGQRPEIRRARKSIAQFKLREGMPIGARVTLRGDRMWEFLDRLTSIALPRIRDFRGLSPKQFDGVGNYTFGLAEQSVFHEIDVDKIDRVRGMDINVVTSATTDDEGRALLRALGFPFKEN</sequence>